<gene>
    <name type="primary">TNF</name>
    <name type="synonym">TNFA</name>
    <name type="synonym">TNFSF2</name>
</gene>
<accession>P59693</accession>
<sequence length="233" mass="25413">MSTKSMIRDVELAEEVLSEKAGGPQGSRSCLCLSLFSFLLVAGATTLFCLLHFGVIGPQREESAGGPSINSPLVQTLRSSSQASSNKPVAHVVADINSPGQLRWWDSYANALMANGVKLEDNQLVVPADGLYLIYSQVLFRGQGCPSTPLFLTHTISRIAVSYQTKVNILSAIKSPCHRETPEWAEAKPWYEPIYQGGVFQLEKGDRLSAEINLPDYLDYAESGQVYFGIIAL</sequence>
<proteinExistence type="evidence at transcript level"/>
<name>TNFA_BUBBU</name>
<protein>
    <recommendedName>
        <fullName>Tumor necrosis factor</fullName>
    </recommendedName>
    <alternativeName>
        <fullName>Cachectin</fullName>
    </alternativeName>
    <alternativeName>
        <fullName>TNF-alpha</fullName>
    </alternativeName>
    <alternativeName>
        <fullName>Tumor necrosis factor ligand superfamily member 2</fullName>
        <shortName>TNF-a</shortName>
    </alternativeName>
    <component>
        <recommendedName>
            <fullName>Tumor necrosis factor, membrane form</fullName>
        </recommendedName>
        <alternativeName>
            <fullName>N-terminal fragment</fullName>
            <shortName>NTF</shortName>
        </alternativeName>
    </component>
    <component>
        <recommendedName>
            <fullName>Intracellular domain 1</fullName>
            <shortName>ICD1</shortName>
        </recommendedName>
    </component>
    <component>
        <recommendedName>
            <fullName>Intracellular domain 2</fullName>
            <shortName>ICD2</shortName>
        </recommendedName>
    </component>
    <component>
        <recommendedName>
            <fullName>C-domain 1</fullName>
        </recommendedName>
    </component>
    <component>
        <recommendedName>
            <fullName>C-domain 2</fullName>
        </recommendedName>
    </component>
    <component>
        <recommendedName>
            <fullName>Tumor necrosis factor, soluble form</fullName>
        </recommendedName>
    </component>
</protein>
<reference key="1">
    <citation type="journal article" date="2004" name="Eur. J. Immunogenet.">
        <title>High nucleotide and amino acid sequence similarities in tumour necrosis factor-alpha amongst Indian buffalo (Bubalus bubalis), Indian cattle (Bos indicus) and other ruminants.</title>
        <authorList>
            <person name="Gupta P.K."/>
            <person name="Bind R.B."/>
            <person name="Walunj S.S."/>
            <person name="Saini M."/>
        </authorList>
    </citation>
    <scope>NUCLEOTIDE SEQUENCE [MRNA]</scope>
</reference>
<feature type="chain" id="PRO_0000034405" description="Tumor necrosis factor, membrane form">
    <location>
        <begin position="1"/>
        <end position="233"/>
    </location>
</feature>
<feature type="chain" id="PRO_0000417183" description="Intracellular domain 1" evidence="1">
    <location>
        <begin position="1"/>
        <end position="39"/>
    </location>
</feature>
<feature type="chain" id="PRO_0000417184" description="Intracellular domain 2" evidence="1">
    <location>
        <begin position="1"/>
        <end position="35"/>
    </location>
</feature>
<feature type="chain" id="PRO_0000417185" description="C-domain 1" evidence="1">
    <location>
        <begin position="50"/>
        <end status="unknown"/>
    </location>
</feature>
<feature type="chain" id="PRO_0000417186" description="C-domain 2" evidence="1">
    <location>
        <begin position="52"/>
        <end status="unknown"/>
    </location>
</feature>
<feature type="chain" id="PRO_0000034406" description="Tumor necrosis factor, soluble form" evidence="1">
    <location>
        <begin position="78"/>
        <end position="233"/>
    </location>
</feature>
<feature type="topological domain" description="Cytoplasmic" evidence="4">
    <location>
        <begin position="1"/>
        <end position="33"/>
    </location>
</feature>
<feature type="transmembrane region" description="Helical; Signal-anchor for type II membrane protein" evidence="1">
    <location>
        <begin position="34"/>
        <end position="56"/>
    </location>
</feature>
<feature type="topological domain" description="Extracellular" evidence="4">
    <location>
        <begin position="57"/>
        <end position="233"/>
    </location>
</feature>
<feature type="domain" description="THD" evidence="5">
    <location>
        <begin position="88"/>
        <end position="233"/>
    </location>
</feature>
<feature type="site" description="Cleavage; by SPPL2A or SPPL2B" evidence="1">
    <location>
        <begin position="34"/>
        <end position="35"/>
    </location>
</feature>
<feature type="site" description="Cleavage; by SPPL2A or SPPL2B" evidence="1">
    <location>
        <begin position="39"/>
        <end position="40"/>
    </location>
</feature>
<feature type="site" description="Cleavage; by SPPL2A or SPPL2B" evidence="1">
    <location>
        <begin position="49"/>
        <end position="50"/>
    </location>
</feature>
<feature type="site" description="Cleavage; by SPPL2A or SPPL2B" evidence="1">
    <location>
        <begin position="51"/>
        <end position="52"/>
    </location>
</feature>
<feature type="site" description="Cleavage; by ADAM17" evidence="1">
    <location>
        <begin position="77"/>
        <end position="78"/>
    </location>
</feature>
<feature type="modified residue" description="Phosphoserine; by CK1" evidence="1">
    <location>
        <position position="2"/>
    </location>
</feature>
<feature type="lipid moiety-binding region" description="N6-myristoyl lysine" evidence="2">
    <location>
        <position position="20"/>
    </location>
</feature>
<feature type="glycosylation site" description="O-linked (GalNAc...) serine; in soluble form" evidence="1">
    <location>
        <position position="80"/>
    </location>
</feature>
<feature type="disulfide bond" evidence="5">
    <location>
        <begin position="145"/>
        <end position="177"/>
    </location>
</feature>
<organism>
    <name type="scientific">Bubalus bubalis</name>
    <name type="common">Domestic water buffalo</name>
    <dbReference type="NCBI Taxonomy" id="89462"/>
    <lineage>
        <taxon>Eukaryota</taxon>
        <taxon>Metazoa</taxon>
        <taxon>Chordata</taxon>
        <taxon>Craniata</taxon>
        <taxon>Vertebrata</taxon>
        <taxon>Euteleostomi</taxon>
        <taxon>Mammalia</taxon>
        <taxon>Eutheria</taxon>
        <taxon>Laurasiatheria</taxon>
        <taxon>Artiodactyla</taxon>
        <taxon>Ruminantia</taxon>
        <taxon>Pecora</taxon>
        <taxon>Bovidae</taxon>
        <taxon>Bovinae</taxon>
        <taxon>Bubalus</taxon>
    </lineage>
</organism>
<comment type="function">
    <text evidence="2 3">Cytokine that binds to TNFRSF1A/TNFR1 and TNFRSF1B/TNFBR. It is mainly secreted by macrophages and can induce cell death of certain tumor cell lines. It is potent pyrogen causing fever by direct action or by stimulation of interleukin-1 secretion and is implicated in the induction of cachexia, Under certain conditions it can stimulate cell proliferation and induce cell differentiation (By similarity). Induces insulin resistance in adipocytes via inhibition of insulin-induced IRS1 tyrosine phosphorylation and insulin-induced glucose uptake. Induces GKAP42 protein degradation in adipocytes which is partially responsible for TNF-induced insulin resistance (By similarity). Plays a role in angiogenesis by inducing VEGF production synergistically with IL1B and IL6 (By similarity). Promotes osteoclastogenesis and therefore mediates bone resorption (By similarity).</text>
</comment>
<comment type="function">
    <text evidence="2">The TNF intracellular domain (ICD) form induces IL12 production in dendritic cells.</text>
</comment>
<comment type="subunit">
    <text evidence="1">Homotrimer. Interacts with SPPL2B (By similarity).</text>
</comment>
<comment type="subcellular location">
    <subcellularLocation>
        <location evidence="1">Cell membrane</location>
        <topology evidence="1">Single-pass type II membrane protein</topology>
    </subcellularLocation>
</comment>
<comment type="subcellular location">
    <molecule>Tumor necrosis factor, membrane form</molecule>
    <subcellularLocation>
        <location evidence="1">Membrane</location>
        <topology evidence="1">Single-pass type II membrane protein</topology>
    </subcellularLocation>
</comment>
<comment type="subcellular location">
    <molecule>Tumor necrosis factor, soluble form</molecule>
    <subcellularLocation>
        <location evidence="1">Secreted</location>
    </subcellularLocation>
</comment>
<comment type="subcellular location">
    <molecule>C-domain 1</molecule>
    <subcellularLocation>
        <location evidence="1">Secreted</location>
    </subcellularLocation>
</comment>
<comment type="subcellular location">
    <molecule>C-domain 2</molecule>
    <subcellularLocation>
        <location evidence="1">Secreted</location>
    </subcellularLocation>
</comment>
<comment type="PTM">
    <text evidence="1">The soluble form derives from the membrane form by proteolytic processing. The membrane-bound form is further proteolytically processed by SPPL2A or SPPL2B through regulated intramembrane proteolysis producing TNF intracellular domains (ICD1 and ICD2) released in the cytosol and TNF C-domain 1 and C-domain 2 secreted into the extracellular space (By similarity).</text>
</comment>
<comment type="PTM">
    <text evidence="1">The membrane form, but not the soluble form, is phosphorylated on serine residues. Dephosphorylation of the membrane form occurs by binding to soluble TNFRSF1A/TNFR1 (By similarity).</text>
</comment>
<comment type="PTM">
    <text evidence="1">O-glycosylated; glycans contain galactose, N-acetylgalactosamine and N-acetylneuraminic acid.</text>
</comment>
<comment type="PTM">
    <molecule>Tumor necrosis factor, soluble form</molecule>
    <text evidence="2">The soluble form is demyristoylated by SIRT6, promoting its secretion.</text>
</comment>
<comment type="similarity">
    <text evidence="6">Belongs to the tumor necrosis factor family.</text>
</comment>
<evidence type="ECO:0000250" key="1"/>
<evidence type="ECO:0000250" key="2">
    <source>
        <dbReference type="UniProtKB" id="P01375"/>
    </source>
</evidence>
<evidence type="ECO:0000250" key="3">
    <source>
        <dbReference type="UniProtKB" id="P06804"/>
    </source>
</evidence>
<evidence type="ECO:0000255" key="4"/>
<evidence type="ECO:0000255" key="5">
    <source>
        <dbReference type="PROSITE-ProRule" id="PRU01387"/>
    </source>
</evidence>
<evidence type="ECO:0000305" key="6"/>
<keyword id="KW-1003">Cell membrane</keyword>
<keyword id="KW-0202">Cytokine</keyword>
<keyword id="KW-1015">Disulfide bond</keyword>
<keyword id="KW-0325">Glycoprotein</keyword>
<keyword id="KW-0449">Lipoprotein</keyword>
<keyword id="KW-0472">Membrane</keyword>
<keyword id="KW-0519">Myristate</keyword>
<keyword id="KW-0597">Phosphoprotein</keyword>
<keyword id="KW-0964">Secreted</keyword>
<keyword id="KW-0735">Signal-anchor</keyword>
<keyword id="KW-0812">Transmembrane</keyword>
<keyword id="KW-1133">Transmembrane helix</keyword>
<dbReference type="EMBL" id="AY221123">
    <property type="protein sequence ID" value="AAO62082.1"/>
    <property type="molecule type" value="mRNA"/>
</dbReference>
<dbReference type="SMR" id="P59693"/>
<dbReference type="GlyCosmos" id="P59693">
    <property type="glycosylation" value="1 site, No reported glycans"/>
</dbReference>
<dbReference type="GO" id="GO:0009986">
    <property type="term" value="C:cell surface"/>
    <property type="evidence" value="ECO:0007669"/>
    <property type="project" value="TreeGrafter"/>
</dbReference>
<dbReference type="GO" id="GO:0005615">
    <property type="term" value="C:extracellular space"/>
    <property type="evidence" value="ECO:0007669"/>
    <property type="project" value="UniProtKB-KW"/>
</dbReference>
<dbReference type="GO" id="GO:0005886">
    <property type="term" value="C:plasma membrane"/>
    <property type="evidence" value="ECO:0007669"/>
    <property type="project" value="UniProtKB-SubCell"/>
</dbReference>
<dbReference type="GO" id="GO:0005125">
    <property type="term" value="F:cytokine activity"/>
    <property type="evidence" value="ECO:0007669"/>
    <property type="project" value="UniProtKB-KW"/>
</dbReference>
<dbReference type="GO" id="GO:0005164">
    <property type="term" value="F:tumor necrosis factor receptor binding"/>
    <property type="evidence" value="ECO:0007669"/>
    <property type="project" value="InterPro"/>
</dbReference>
<dbReference type="GO" id="GO:0008625">
    <property type="term" value="P:extrinsic apoptotic signaling pathway via death domain receptors"/>
    <property type="evidence" value="ECO:0007669"/>
    <property type="project" value="TreeGrafter"/>
</dbReference>
<dbReference type="GO" id="GO:0006955">
    <property type="term" value="P:immune response"/>
    <property type="evidence" value="ECO:0007669"/>
    <property type="project" value="InterPro"/>
</dbReference>
<dbReference type="GO" id="GO:0097527">
    <property type="term" value="P:necroptotic signaling pathway"/>
    <property type="evidence" value="ECO:0000250"/>
    <property type="project" value="CAFA"/>
</dbReference>
<dbReference type="GO" id="GO:0043242">
    <property type="term" value="P:negative regulation of protein-containing complex disassembly"/>
    <property type="evidence" value="ECO:0000250"/>
    <property type="project" value="UniProtKB"/>
</dbReference>
<dbReference type="GO" id="GO:0043065">
    <property type="term" value="P:positive regulation of apoptotic process"/>
    <property type="evidence" value="ECO:0000250"/>
    <property type="project" value="UniProtKB"/>
</dbReference>
<dbReference type="GO" id="GO:0043123">
    <property type="term" value="P:positive regulation of canonical NF-kappaB signal transduction"/>
    <property type="evidence" value="ECO:0007669"/>
    <property type="project" value="TreeGrafter"/>
</dbReference>
<dbReference type="GO" id="GO:2001238">
    <property type="term" value="P:positive regulation of extrinsic apoptotic signaling pathway"/>
    <property type="evidence" value="ECO:0007669"/>
    <property type="project" value="TreeGrafter"/>
</dbReference>
<dbReference type="GO" id="GO:0043507">
    <property type="term" value="P:positive regulation of JUN kinase activity"/>
    <property type="evidence" value="ECO:0000250"/>
    <property type="project" value="UniProtKB"/>
</dbReference>
<dbReference type="GO" id="GO:0043406">
    <property type="term" value="P:positive regulation of MAP kinase activity"/>
    <property type="evidence" value="ECO:0000250"/>
    <property type="project" value="UniProtKB"/>
</dbReference>
<dbReference type="GO" id="GO:0051092">
    <property type="term" value="P:positive regulation of NF-kappaB transcription factor activity"/>
    <property type="evidence" value="ECO:0000250"/>
    <property type="project" value="UniProtKB"/>
</dbReference>
<dbReference type="GO" id="GO:0001934">
    <property type="term" value="P:positive regulation of protein phosphorylation"/>
    <property type="evidence" value="ECO:0000250"/>
    <property type="project" value="UniProtKB"/>
</dbReference>
<dbReference type="GO" id="GO:0043243">
    <property type="term" value="P:positive regulation of protein-containing complex disassembly"/>
    <property type="evidence" value="ECO:0000250"/>
    <property type="project" value="UniProtKB"/>
</dbReference>
<dbReference type="GO" id="GO:0045944">
    <property type="term" value="P:positive regulation of transcription by RNA polymerase II"/>
    <property type="evidence" value="ECO:0007669"/>
    <property type="project" value="TreeGrafter"/>
</dbReference>
<dbReference type="GO" id="GO:0065008">
    <property type="term" value="P:regulation of biological quality"/>
    <property type="evidence" value="ECO:0007669"/>
    <property type="project" value="UniProtKB-ARBA"/>
</dbReference>
<dbReference type="GO" id="GO:0050793">
    <property type="term" value="P:regulation of developmental process"/>
    <property type="evidence" value="ECO:0007669"/>
    <property type="project" value="UniProtKB-ARBA"/>
</dbReference>
<dbReference type="GO" id="GO:0051239">
    <property type="term" value="P:regulation of multicellular organismal process"/>
    <property type="evidence" value="ECO:0007669"/>
    <property type="project" value="UniProtKB-ARBA"/>
</dbReference>
<dbReference type="GO" id="GO:0051046">
    <property type="term" value="P:regulation of secretion"/>
    <property type="evidence" value="ECO:0007669"/>
    <property type="project" value="UniProtKB-ARBA"/>
</dbReference>
<dbReference type="GO" id="GO:0033209">
    <property type="term" value="P:tumor necrosis factor-mediated signaling pathway"/>
    <property type="evidence" value="ECO:0007669"/>
    <property type="project" value="TreeGrafter"/>
</dbReference>
<dbReference type="GO" id="GO:0010573">
    <property type="term" value="P:vascular endothelial growth factor production"/>
    <property type="evidence" value="ECO:0000250"/>
    <property type="project" value="UniProtKB"/>
</dbReference>
<dbReference type="CDD" id="cd00184">
    <property type="entry name" value="TNF"/>
    <property type="match status" value="1"/>
</dbReference>
<dbReference type="FunFam" id="2.60.120.40:FF:000007">
    <property type="entry name" value="Tumor necrosis factor"/>
    <property type="match status" value="1"/>
</dbReference>
<dbReference type="Gene3D" id="2.60.120.40">
    <property type="match status" value="1"/>
</dbReference>
<dbReference type="InterPro" id="IPR006053">
    <property type="entry name" value="TNF"/>
</dbReference>
<dbReference type="InterPro" id="IPR002959">
    <property type="entry name" value="TNF_alpha"/>
</dbReference>
<dbReference type="InterPro" id="IPR021184">
    <property type="entry name" value="TNF_CS"/>
</dbReference>
<dbReference type="InterPro" id="IPR006052">
    <property type="entry name" value="TNF_dom"/>
</dbReference>
<dbReference type="InterPro" id="IPR008983">
    <property type="entry name" value="Tumour_necrosis_fac-like_dom"/>
</dbReference>
<dbReference type="PANTHER" id="PTHR11471:SF23">
    <property type="entry name" value="TUMOR NECROSIS FACTOR"/>
    <property type="match status" value="1"/>
</dbReference>
<dbReference type="PANTHER" id="PTHR11471">
    <property type="entry name" value="TUMOR NECROSIS FACTOR FAMILY MEMBER"/>
    <property type="match status" value="1"/>
</dbReference>
<dbReference type="Pfam" id="PF00229">
    <property type="entry name" value="TNF"/>
    <property type="match status" value="1"/>
</dbReference>
<dbReference type="PRINTS" id="PR01234">
    <property type="entry name" value="TNECROSISFCT"/>
</dbReference>
<dbReference type="PRINTS" id="PR01235">
    <property type="entry name" value="TNFALPHA"/>
</dbReference>
<dbReference type="SMART" id="SM00207">
    <property type="entry name" value="TNF"/>
    <property type="match status" value="1"/>
</dbReference>
<dbReference type="SUPFAM" id="SSF49842">
    <property type="entry name" value="TNF-like"/>
    <property type="match status" value="1"/>
</dbReference>
<dbReference type="PROSITE" id="PS00251">
    <property type="entry name" value="THD_1"/>
    <property type="match status" value="1"/>
</dbReference>
<dbReference type="PROSITE" id="PS50049">
    <property type="entry name" value="THD_2"/>
    <property type="match status" value="1"/>
</dbReference>